<protein>
    <recommendedName>
        <fullName>Embryonic abundant protein VF30.1</fullName>
    </recommendedName>
</protein>
<reference key="1">
    <citation type="journal article" date="1988" name="Plant Mol. Biol.">
        <title>Abundant embryonic mRNA in field bean (Vicia faba L.) codes for a new class of seed proteins: cDNA cloning and characterization of the primary translation product.</title>
        <authorList>
            <person name="Bassuener R."/>
            <person name="Baeumlein H."/>
            <person name="Huth A."/>
            <person name="Jung R."/>
            <person name="Wobus U."/>
            <person name="Rapoport T.A."/>
            <person name="Saalbach G."/>
            <person name="Muentz K."/>
        </authorList>
        <dbReference type="AGRICOLA" id="IND92000056"/>
    </citation>
    <scope>NUCLEOTIDE SEQUENCE [MRNA]</scope>
    <scope>DEVELOPMENTAL STAGE</scope>
    <scope>SUBCELLULAR LOCATION</scope>
    <scope>GENE FAMILY</scope>
    <source>
        <strain>cv. Fribo</strain>
        <tissue>Seed</tissue>
    </source>
</reference>
<reference key="2">
    <citation type="journal article" date="1991" name="Mol. Gen. Genet.">
        <title>A novel seed protein gene from Vicia faba is developmentally regulated in transgenic tobacco and Arabidopsis plants.</title>
        <authorList>
            <person name="Baumlein H."/>
            <person name="Boerjan W."/>
            <person name="Nagy I."/>
            <person name="Bassuner R."/>
            <person name="Van Montagu M."/>
            <person name="Inze D."/>
            <person name="Wobus U."/>
        </authorList>
    </citation>
    <scope>GENE FAMILY</scope>
    <source>
        <strain>cv. Fribo</strain>
        <tissue>Leaf</tissue>
    </source>
</reference>
<reference key="3">
    <citation type="journal article" date="1998" name="Mol. Gen. Genet.">
        <title>A conserved BURP domain defines a novel group of plant proteins with unusual primary structures.</title>
        <authorList>
            <person name="Hattori J."/>
            <person name="Boutilier K.A."/>
            <person name="van Lookeren Campagne M.M."/>
            <person name="Miki B.L."/>
        </authorList>
    </citation>
    <scope>DOMAIN</scope>
</reference>
<evidence type="ECO:0000255" key="1"/>
<evidence type="ECO:0000255" key="2">
    <source>
        <dbReference type="PROSITE-ProRule" id="PRU00604"/>
    </source>
</evidence>
<evidence type="ECO:0000269" key="3">
    <source>
    </source>
</evidence>
<evidence type="ECO:0000269" key="4">
    <source>
    </source>
</evidence>
<evidence type="ECO:0000269" key="5">
    <source>
    </source>
</evidence>
<evidence type="ECO:0000305" key="6">
    <source>
    </source>
</evidence>
<feature type="signal peptide" evidence="1">
    <location>
        <begin position="1"/>
        <end position="25"/>
    </location>
</feature>
<feature type="chain" id="PRO_0000017348" description="Embryonic abundant protein VF30.1">
    <location>
        <begin position="26"/>
        <end position="268"/>
    </location>
</feature>
<feature type="domain" description="BURP" evidence="2">
    <location>
        <begin position="68"/>
        <end position="259"/>
    </location>
</feature>
<feature type="glycosylation site" description="N-linked (GlcNAc...) asparagine" evidence="1">
    <location>
        <position position="259"/>
    </location>
</feature>
<proteinExistence type="evidence at transcript level"/>
<name>EA30_VICFA</name>
<accession>P21745</accession>
<comment type="subcellular location">
    <subcellularLocation>
        <location evidence="4">Secreted</location>
    </subcellularLocation>
    <text evidence="4">Translocated in vitro across the endoplasmic reticulum membrane with concomitant removal of its signal peptide.</text>
</comment>
<comment type="tissue specificity">
    <text evidence="6">Seed.</text>
</comment>
<comment type="developmental stage">
    <text evidence="4">Most abundant mRNA species from cotyledons at early stages of development, but the encoded protein does not accumulate in cotyledons.</text>
</comment>
<comment type="domain">
    <text evidence="5">The BURP domain located at the C-terminus has not been identified in non-plant proteins.</text>
</comment>
<comment type="miscellaneous">
    <text evidence="3">The USP gene family consists of roughly 10 to 20 members.</text>
</comment>
<dbReference type="EMBL" id="X13242">
    <property type="status" value="NOT_ANNOTATED_CDS"/>
    <property type="molecule type" value="mRNA"/>
</dbReference>
<dbReference type="PIR" id="S05471">
    <property type="entry name" value="S05471"/>
</dbReference>
<dbReference type="SMR" id="P21745"/>
<dbReference type="GO" id="GO:0005576">
    <property type="term" value="C:extracellular region"/>
    <property type="evidence" value="ECO:0007669"/>
    <property type="project" value="UniProtKB-SubCell"/>
</dbReference>
<dbReference type="InterPro" id="IPR044816">
    <property type="entry name" value="BURP"/>
</dbReference>
<dbReference type="InterPro" id="IPR004873">
    <property type="entry name" value="BURP_dom"/>
</dbReference>
<dbReference type="PANTHER" id="PTHR31236:SF35">
    <property type="entry name" value="ABUNDANT PROTEIN, PUTATIVE-RELATED"/>
    <property type="match status" value="1"/>
</dbReference>
<dbReference type="PANTHER" id="PTHR31236">
    <property type="entry name" value="BURP DOMAIN PROTEIN USPL1-LIKE"/>
    <property type="match status" value="1"/>
</dbReference>
<dbReference type="Pfam" id="PF03181">
    <property type="entry name" value="BURP"/>
    <property type="match status" value="1"/>
</dbReference>
<dbReference type="SMART" id="SM01045">
    <property type="entry name" value="BURP"/>
    <property type="match status" value="1"/>
</dbReference>
<dbReference type="PROSITE" id="PS51277">
    <property type="entry name" value="BURP"/>
    <property type="match status" value="1"/>
</dbReference>
<sequence length="268" mass="29757">MEFAHLTVLSLFCLAFVGITATSSGEDYWQSIWPNTPLPKTFSDLLIPSGKTNSLPIKSEELKQYSTLFFEHDLHPGKNFILGNTNSVGSIIRPFTKSRQGVTDSIWLANKEKQSLEDFCYSPTAIAEHKHCVSSLKSMIDQVISHFGSTKIKAISSNFAPYQDQYVVEDVKKVGDNAVMCHRLNFEKVVFNCHQVRDTTAYVVSLVASDGTKTKALTVCHHDTRGMNPELLYEALEVTPGTVPVCHFIGNKAAAWVPNHTADNLCVM</sequence>
<keyword id="KW-0325">Glycoprotein</keyword>
<keyword id="KW-0677">Repeat</keyword>
<keyword id="KW-0964">Secreted</keyword>
<keyword id="KW-0732">Signal</keyword>
<organism>
    <name type="scientific">Vicia faba</name>
    <name type="common">Broad bean</name>
    <name type="synonym">Faba vulgaris</name>
    <dbReference type="NCBI Taxonomy" id="3906"/>
    <lineage>
        <taxon>Eukaryota</taxon>
        <taxon>Viridiplantae</taxon>
        <taxon>Streptophyta</taxon>
        <taxon>Embryophyta</taxon>
        <taxon>Tracheophyta</taxon>
        <taxon>Spermatophyta</taxon>
        <taxon>Magnoliopsida</taxon>
        <taxon>eudicotyledons</taxon>
        <taxon>Gunneridae</taxon>
        <taxon>Pentapetalae</taxon>
        <taxon>rosids</taxon>
        <taxon>fabids</taxon>
        <taxon>Fabales</taxon>
        <taxon>Fabaceae</taxon>
        <taxon>Papilionoideae</taxon>
        <taxon>50 kb inversion clade</taxon>
        <taxon>NPAAA clade</taxon>
        <taxon>Hologalegina</taxon>
        <taxon>IRL clade</taxon>
        <taxon>Fabeae</taxon>
        <taxon>Vicia</taxon>
    </lineage>
</organism>